<organism>
    <name type="scientific">Staphylococcus aureus (strain Mu50 / ATCC 700699)</name>
    <dbReference type="NCBI Taxonomy" id="158878"/>
    <lineage>
        <taxon>Bacteria</taxon>
        <taxon>Bacillati</taxon>
        <taxon>Bacillota</taxon>
        <taxon>Bacilli</taxon>
        <taxon>Bacillales</taxon>
        <taxon>Staphylococcaceae</taxon>
        <taxon>Staphylococcus</taxon>
    </lineage>
</organism>
<sequence>MRVNVTLACTECGDRNYITTKNKRNNPERVEMKKFCSRENKQTLHRETK</sequence>
<gene>
    <name type="primary">rpmG1</name>
    <name type="ordered locus">SAV1551</name>
</gene>
<evidence type="ECO:0000255" key="1">
    <source>
        <dbReference type="HAMAP-Rule" id="MF_00294"/>
    </source>
</evidence>
<evidence type="ECO:0000305" key="2"/>
<name>RL331_STAAM</name>
<accession>P66227</accession>
<accession>Q99TU3</accession>
<comment type="similarity">
    <text evidence="2">Belongs to the bacterial ribosomal protein bL33 family.</text>
</comment>
<dbReference type="EMBL" id="BA000017">
    <property type="protein sequence ID" value="BAB57713.1"/>
    <property type="molecule type" value="Genomic_DNA"/>
</dbReference>
<dbReference type="SMR" id="P66227"/>
<dbReference type="KEGG" id="sav:SAV1551"/>
<dbReference type="HOGENOM" id="CLU_190949_0_2_9"/>
<dbReference type="PhylomeDB" id="P66227"/>
<dbReference type="Proteomes" id="UP000002481">
    <property type="component" value="Chromosome"/>
</dbReference>
<dbReference type="GO" id="GO:0005737">
    <property type="term" value="C:cytoplasm"/>
    <property type="evidence" value="ECO:0007669"/>
    <property type="project" value="UniProtKB-ARBA"/>
</dbReference>
<dbReference type="GO" id="GO:1990904">
    <property type="term" value="C:ribonucleoprotein complex"/>
    <property type="evidence" value="ECO:0007669"/>
    <property type="project" value="UniProtKB-KW"/>
</dbReference>
<dbReference type="GO" id="GO:0005840">
    <property type="term" value="C:ribosome"/>
    <property type="evidence" value="ECO:0007669"/>
    <property type="project" value="UniProtKB-KW"/>
</dbReference>
<dbReference type="GO" id="GO:0003735">
    <property type="term" value="F:structural constituent of ribosome"/>
    <property type="evidence" value="ECO:0007669"/>
    <property type="project" value="InterPro"/>
</dbReference>
<dbReference type="GO" id="GO:0006412">
    <property type="term" value="P:translation"/>
    <property type="evidence" value="ECO:0007669"/>
    <property type="project" value="UniProtKB-UniRule"/>
</dbReference>
<dbReference type="Gene3D" id="2.20.28.120">
    <property type="entry name" value="Ribosomal protein L33"/>
    <property type="match status" value="1"/>
</dbReference>
<dbReference type="HAMAP" id="MF_00294">
    <property type="entry name" value="Ribosomal_bL33"/>
    <property type="match status" value="1"/>
</dbReference>
<dbReference type="InterPro" id="IPR001705">
    <property type="entry name" value="Ribosomal_bL33"/>
</dbReference>
<dbReference type="InterPro" id="IPR018264">
    <property type="entry name" value="Ribosomal_bL33_CS"/>
</dbReference>
<dbReference type="InterPro" id="IPR038584">
    <property type="entry name" value="Ribosomal_bL33_sf"/>
</dbReference>
<dbReference type="InterPro" id="IPR011332">
    <property type="entry name" value="Ribosomal_zn-bd"/>
</dbReference>
<dbReference type="NCBIfam" id="NF001764">
    <property type="entry name" value="PRK00504.1"/>
    <property type="match status" value="1"/>
</dbReference>
<dbReference type="NCBIfam" id="NF001860">
    <property type="entry name" value="PRK00595.1"/>
    <property type="match status" value="1"/>
</dbReference>
<dbReference type="NCBIfam" id="TIGR01023">
    <property type="entry name" value="rpmG_bact"/>
    <property type="match status" value="1"/>
</dbReference>
<dbReference type="PANTHER" id="PTHR43168">
    <property type="entry name" value="50S RIBOSOMAL PROTEIN L33, CHLOROPLASTIC"/>
    <property type="match status" value="1"/>
</dbReference>
<dbReference type="PANTHER" id="PTHR43168:SF2">
    <property type="entry name" value="LARGE RIBOSOMAL SUBUNIT PROTEIN BL33C"/>
    <property type="match status" value="1"/>
</dbReference>
<dbReference type="Pfam" id="PF00471">
    <property type="entry name" value="Ribosomal_L33"/>
    <property type="match status" value="1"/>
</dbReference>
<dbReference type="SUPFAM" id="SSF57829">
    <property type="entry name" value="Zn-binding ribosomal proteins"/>
    <property type="match status" value="1"/>
</dbReference>
<dbReference type="PROSITE" id="PS00582">
    <property type="entry name" value="RIBOSOMAL_L33"/>
    <property type="match status" value="1"/>
</dbReference>
<protein>
    <recommendedName>
        <fullName evidence="1">Large ribosomal subunit protein bL33A</fullName>
    </recommendedName>
    <alternativeName>
        <fullName>50S ribosomal protein L33 1</fullName>
    </alternativeName>
</protein>
<reference key="1">
    <citation type="journal article" date="2001" name="Lancet">
        <title>Whole genome sequencing of meticillin-resistant Staphylococcus aureus.</title>
        <authorList>
            <person name="Kuroda M."/>
            <person name="Ohta T."/>
            <person name="Uchiyama I."/>
            <person name="Baba T."/>
            <person name="Yuzawa H."/>
            <person name="Kobayashi I."/>
            <person name="Cui L."/>
            <person name="Oguchi A."/>
            <person name="Aoki K."/>
            <person name="Nagai Y."/>
            <person name="Lian J.-Q."/>
            <person name="Ito T."/>
            <person name="Kanamori M."/>
            <person name="Matsumaru H."/>
            <person name="Maruyama A."/>
            <person name="Murakami H."/>
            <person name="Hosoyama A."/>
            <person name="Mizutani-Ui Y."/>
            <person name="Takahashi N.K."/>
            <person name="Sawano T."/>
            <person name="Inoue R."/>
            <person name="Kaito C."/>
            <person name="Sekimizu K."/>
            <person name="Hirakawa H."/>
            <person name="Kuhara S."/>
            <person name="Goto S."/>
            <person name="Yabuzaki J."/>
            <person name="Kanehisa M."/>
            <person name="Yamashita A."/>
            <person name="Oshima K."/>
            <person name="Furuya K."/>
            <person name="Yoshino C."/>
            <person name="Shiba T."/>
            <person name="Hattori M."/>
            <person name="Ogasawara N."/>
            <person name="Hayashi H."/>
            <person name="Hiramatsu K."/>
        </authorList>
    </citation>
    <scope>NUCLEOTIDE SEQUENCE [LARGE SCALE GENOMIC DNA]</scope>
    <source>
        <strain>Mu50 / ATCC 700699</strain>
    </source>
</reference>
<keyword id="KW-0687">Ribonucleoprotein</keyword>
<keyword id="KW-0689">Ribosomal protein</keyword>
<proteinExistence type="inferred from homology"/>
<feature type="chain" id="PRO_0000170213" description="Large ribosomal subunit protein bL33A">
    <location>
        <begin position="1"/>
        <end position="49"/>
    </location>
</feature>